<accession>Q7MTP5</accession>
<comment type="function">
    <text evidence="1">Catalyzes the reversible phosphorylation of UMP to UDP.</text>
</comment>
<comment type="catalytic activity">
    <reaction evidence="1">
        <text>UMP + ATP = UDP + ADP</text>
        <dbReference type="Rhea" id="RHEA:24400"/>
        <dbReference type="ChEBI" id="CHEBI:30616"/>
        <dbReference type="ChEBI" id="CHEBI:57865"/>
        <dbReference type="ChEBI" id="CHEBI:58223"/>
        <dbReference type="ChEBI" id="CHEBI:456216"/>
        <dbReference type="EC" id="2.7.4.22"/>
    </reaction>
</comment>
<comment type="activity regulation">
    <text evidence="1">Inhibited by UTP.</text>
</comment>
<comment type="pathway">
    <text evidence="1">Pyrimidine metabolism; CTP biosynthesis via de novo pathway; UDP from UMP (UMPK route): step 1/1.</text>
</comment>
<comment type="subunit">
    <text evidence="1">Homohexamer.</text>
</comment>
<comment type="subcellular location">
    <subcellularLocation>
        <location evidence="1">Cytoplasm</location>
    </subcellularLocation>
</comment>
<comment type="similarity">
    <text evidence="1">Belongs to the UMP kinase family.</text>
</comment>
<feature type="chain" id="PRO_1000053977" description="Uridylate kinase">
    <location>
        <begin position="1"/>
        <end position="239"/>
    </location>
</feature>
<feature type="binding site" evidence="1">
    <location>
        <begin position="10"/>
        <end position="13"/>
    </location>
    <ligand>
        <name>ATP</name>
        <dbReference type="ChEBI" id="CHEBI:30616"/>
    </ligand>
</feature>
<feature type="binding site" evidence="1">
    <location>
        <position position="52"/>
    </location>
    <ligand>
        <name>UMP</name>
        <dbReference type="ChEBI" id="CHEBI:57865"/>
    </ligand>
</feature>
<feature type="binding site" evidence="1">
    <location>
        <position position="53"/>
    </location>
    <ligand>
        <name>ATP</name>
        <dbReference type="ChEBI" id="CHEBI:30616"/>
    </ligand>
</feature>
<feature type="binding site" evidence="1">
    <location>
        <position position="57"/>
    </location>
    <ligand>
        <name>ATP</name>
        <dbReference type="ChEBI" id="CHEBI:30616"/>
    </ligand>
</feature>
<feature type="binding site" evidence="1">
    <location>
        <position position="72"/>
    </location>
    <ligand>
        <name>UMP</name>
        <dbReference type="ChEBI" id="CHEBI:57865"/>
    </ligand>
</feature>
<feature type="binding site" evidence="1">
    <location>
        <begin position="133"/>
        <end position="140"/>
    </location>
    <ligand>
        <name>UMP</name>
        <dbReference type="ChEBI" id="CHEBI:57865"/>
    </ligand>
</feature>
<feature type="binding site" evidence="1">
    <location>
        <position position="160"/>
    </location>
    <ligand>
        <name>ATP</name>
        <dbReference type="ChEBI" id="CHEBI:30616"/>
    </ligand>
</feature>
<feature type="binding site" evidence="1">
    <location>
        <position position="166"/>
    </location>
    <ligand>
        <name>ATP</name>
        <dbReference type="ChEBI" id="CHEBI:30616"/>
    </ligand>
</feature>
<feature type="binding site" evidence="1">
    <location>
        <position position="169"/>
    </location>
    <ligand>
        <name>ATP</name>
        <dbReference type="ChEBI" id="CHEBI:30616"/>
    </ligand>
</feature>
<gene>
    <name evidence="1" type="primary">pyrH</name>
    <name type="ordered locus">PG_1902</name>
</gene>
<reference key="1">
    <citation type="journal article" date="2003" name="J. Bacteriol.">
        <title>Complete genome sequence of the oral pathogenic bacterium Porphyromonas gingivalis strain W83.</title>
        <authorList>
            <person name="Nelson K.E."/>
            <person name="Fleischmann R.D."/>
            <person name="DeBoy R.T."/>
            <person name="Paulsen I.T."/>
            <person name="Fouts D.E."/>
            <person name="Eisen J.A."/>
            <person name="Daugherty S.C."/>
            <person name="Dodson R.J."/>
            <person name="Durkin A.S."/>
            <person name="Gwinn M.L."/>
            <person name="Haft D.H."/>
            <person name="Kolonay J.F."/>
            <person name="Nelson W.C."/>
            <person name="Mason T.M."/>
            <person name="Tallon L."/>
            <person name="Gray J."/>
            <person name="Granger D."/>
            <person name="Tettelin H."/>
            <person name="Dong H."/>
            <person name="Galvin J.L."/>
            <person name="Duncan M.J."/>
            <person name="Dewhirst F.E."/>
            <person name="Fraser C.M."/>
        </authorList>
    </citation>
    <scope>NUCLEOTIDE SEQUENCE [LARGE SCALE GENOMIC DNA]</scope>
    <source>
        <strain>ATCC BAA-308 / W83</strain>
    </source>
</reference>
<evidence type="ECO:0000255" key="1">
    <source>
        <dbReference type="HAMAP-Rule" id="MF_01220"/>
    </source>
</evidence>
<sequence length="239" mass="25706">MTAYKRVLLKLSGESLMGAQQYGIDPNRLADYASDIKEACAMGVQIGIVIGGGNIFRGVSGAAKGFDRVKGDQMGMLATVINSLALSSALEGVGVKTKVLTAVRMEPIGEFYNKWHAIELLEQGYVTIFSCGTGNPFFTTDTGSSLRGIEIEADAMLKGTRVDGIYTADPEKDPSATKFDRITYDEIYARGLKVMDLTATAMCMENNLPIVVFDMDTPGNLLKVLRGEKIGTYVSNTSA</sequence>
<keyword id="KW-0067">ATP-binding</keyword>
<keyword id="KW-0963">Cytoplasm</keyword>
<keyword id="KW-0418">Kinase</keyword>
<keyword id="KW-0547">Nucleotide-binding</keyword>
<keyword id="KW-0665">Pyrimidine biosynthesis</keyword>
<keyword id="KW-1185">Reference proteome</keyword>
<keyword id="KW-0808">Transferase</keyword>
<dbReference type="EC" id="2.7.4.22" evidence="1"/>
<dbReference type="EMBL" id="AE015924">
    <property type="protein sequence ID" value="AAQ66886.1"/>
    <property type="molecule type" value="Genomic_DNA"/>
</dbReference>
<dbReference type="RefSeq" id="WP_005873990.1">
    <property type="nucleotide sequence ID" value="NC_002950.2"/>
</dbReference>
<dbReference type="SMR" id="Q7MTP5"/>
<dbReference type="STRING" id="242619.PG_1902"/>
<dbReference type="DNASU" id="2551652"/>
<dbReference type="EnsemblBacteria" id="AAQ66886">
    <property type="protein sequence ID" value="AAQ66886"/>
    <property type="gene ID" value="PG_1902"/>
</dbReference>
<dbReference type="GeneID" id="29256984"/>
<dbReference type="KEGG" id="pgi:PG_1902"/>
<dbReference type="eggNOG" id="COG0528">
    <property type="taxonomic scope" value="Bacteria"/>
</dbReference>
<dbReference type="HOGENOM" id="CLU_033861_0_0_10"/>
<dbReference type="UniPathway" id="UPA00159">
    <property type="reaction ID" value="UER00275"/>
</dbReference>
<dbReference type="Proteomes" id="UP000000588">
    <property type="component" value="Chromosome"/>
</dbReference>
<dbReference type="GO" id="GO:0005737">
    <property type="term" value="C:cytoplasm"/>
    <property type="evidence" value="ECO:0007669"/>
    <property type="project" value="UniProtKB-SubCell"/>
</dbReference>
<dbReference type="GO" id="GO:0005524">
    <property type="term" value="F:ATP binding"/>
    <property type="evidence" value="ECO:0007669"/>
    <property type="project" value="UniProtKB-KW"/>
</dbReference>
<dbReference type="GO" id="GO:0033862">
    <property type="term" value="F:UMP kinase activity"/>
    <property type="evidence" value="ECO:0007669"/>
    <property type="project" value="UniProtKB-EC"/>
</dbReference>
<dbReference type="GO" id="GO:0044210">
    <property type="term" value="P:'de novo' CTP biosynthetic process"/>
    <property type="evidence" value="ECO:0007669"/>
    <property type="project" value="UniProtKB-UniRule"/>
</dbReference>
<dbReference type="GO" id="GO:0006225">
    <property type="term" value="P:UDP biosynthetic process"/>
    <property type="evidence" value="ECO:0007669"/>
    <property type="project" value="TreeGrafter"/>
</dbReference>
<dbReference type="CDD" id="cd04254">
    <property type="entry name" value="AAK_UMPK-PyrH-Ec"/>
    <property type="match status" value="1"/>
</dbReference>
<dbReference type="FunFam" id="3.40.1160.10:FF:000001">
    <property type="entry name" value="Uridylate kinase"/>
    <property type="match status" value="1"/>
</dbReference>
<dbReference type="Gene3D" id="3.40.1160.10">
    <property type="entry name" value="Acetylglutamate kinase-like"/>
    <property type="match status" value="1"/>
</dbReference>
<dbReference type="HAMAP" id="MF_01220_B">
    <property type="entry name" value="PyrH_B"/>
    <property type="match status" value="1"/>
</dbReference>
<dbReference type="InterPro" id="IPR036393">
    <property type="entry name" value="AceGlu_kinase-like_sf"/>
</dbReference>
<dbReference type="InterPro" id="IPR001048">
    <property type="entry name" value="Asp/Glu/Uridylate_kinase"/>
</dbReference>
<dbReference type="InterPro" id="IPR011817">
    <property type="entry name" value="Uridylate_kinase"/>
</dbReference>
<dbReference type="InterPro" id="IPR015963">
    <property type="entry name" value="Uridylate_kinase_bac"/>
</dbReference>
<dbReference type="NCBIfam" id="TIGR02075">
    <property type="entry name" value="pyrH_bact"/>
    <property type="match status" value="1"/>
</dbReference>
<dbReference type="PANTHER" id="PTHR42833">
    <property type="entry name" value="URIDYLATE KINASE"/>
    <property type="match status" value="1"/>
</dbReference>
<dbReference type="PANTHER" id="PTHR42833:SF4">
    <property type="entry name" value="URIDYLATE KINASE PUMPKIN, CHLOROPLASTIC"/>
    <property type="match status" value="1"/>
</dbReference>
<dbReference type="Pfam" id="PF00696">
    <property type="entry name" value="AA_kinase"/>
    <property type="match status" value="1"/>
</dbReference>
<dbReference type="PIRSF" id="PIRSF005650">
    <property type="entry name" value="Uridylate_kin"/>
    <property type="match status" value="1"/>
</dbReference>
<dbReference type="SUPFAM" id="SSF53633">
    <property type="entry name" value="Carbamate kinase-like"/>
    <property type="match status" value="1"/>
</dbReference>
<name>PYRH_PORGI</name>
<protein>
    <recommendedName>
        <fullName evidence="1">Uridylate kinase</fullName>
        <shortName evidence="1">UK</shortName>
        <ecNumber evidence="1">2.7.4.22</ecNumber>
    </recommendedName>
    <alternativeName>
        <fullName evidence="1">Uridine monophosphate kinase</fullName>
        <shortName evidence="1">UMP kinase</shortName>
        <shortName evidence="1">UMPK</shortName>
    </alternativeName>
</protein>
<proteinExistence type="inferred from homology"/>
<organism>
    <name type="scientific">Porphyromonas gingivalis (strain ATCC BAA-308 / W83)</name>
    <dbReference type="NCBI Taxonomy" id="242619"/>
    <lineage>
        <taxon>Bacteria</taxon>
        <taxon>Pseudomonadati</taxon>
        <taxon>Bacteroidota</taxon>
        <taxon>Bacteroidia</taxon>
        <taxon>Bacteroidales</taxon>
        <taxon>Porphyromonadaceae</taxon>
        <taxon>Porphyromonas</taxon>
    </lineage>
</organism>